<evidence type="ECO:0000255" key="1">
    <source>
        <dbReference type="HAMAP-Rule" id="MF_01274"/>
    </source>
</evidence>
<organism>
    <name type="scientific">Christiangramia forsetii (strain DSM 17595 / CGMCC 1.15422 / KT0803)</name>
    <name type="common">Gramella forsetii</name>
    <dbReference type="NCBI Taxonomy" id="411154"/>
    <lineage>
        <taxon>Bacteria</taxon>
        <taxon>Pseudomonadati</taxon>
        <taxon>Bacteroidota</taxon>
        <taxon>Flavobacteriia</taxon>
        <taxon>Flavobacteriales</taxon>
        <taxon>Flavobacteriaceae</taxon>
        <taxon>Christiangramia</taxon>
    </lineage>
</organism>
<name>COAX_CHRFK</name>
<comment type="function">
    <text evidence="1">Catalyzes the phosphorylation of pantothenate (Pan), the first step in CoA biosynthesis.</text>
</comment>
<comment type="catalytic activity">
    <reaction evidence="1">
        <text>(R)-pantothenate + ATP = (R)-4'-phosphopantothenate + ADP + H(+)</text>
        <dbReference type="Rhea" id="RHEA:16373"/>
        <dbReference type="ChEBI" id="CHEBI:10986"/>
        <dbReference type="ChEBI" id="CHEBI:15378"/>
        <dbReference type="ChEBI" id="CHEBI:29032"/>
        <dbReference type="ChEBI" id="CHEBI:30616"/>
        <dbReference type="ChEBI" id="CHEBI:456216"/>
        <dbReference type="EC" id="2.7.1.33"/>
    </reaction>
</comment>
<comment type="cofactor">
    <cofactor evidence="1">
        <name>NH4(+)</name>
        <dbReference type="ChEBI" id="CHEBI:28938"/>
    </cofactor>
    <cofactor evidence="1">
        <name>K(+)</name>
        <dbReference type="ChEBI" id="CHEBI:29103"/>
    </cofactor>
    <text evidence="1">A monovalent cation. Ammonium or potassium.</text>
</comment>
<comment type="pathway">
    <text evidence="1">Cofactor biosynthesis; coenzyme A biosynthesis; CoA from (R)-pantothenate: step 1/5.</text>
</comment>
<comment type="subunit">
    <text evidence="1">Homodimer.</text>
</comment>
<comment type="subcellular location">
    <subcellularLocation>
        <location evidence="1">Cytoplasm</location>
    </subcellularLocation>
</comment>
<comment type="similarity">
    <text evidence="1">Belongs to the type III pantothenate kinase family.</text>
</comment>
<dbReference type="EC" id="2.7.1.33" evidence="1"/>
<dbReference type="EMBL" id="CU207366">
    <property type="protein sequence ID" value="CAL67928.1"/>
    <property type="molecule type" value="Genomic_DNA"/>
</dbReference>
<dbReference type="RefSeq" id="WP_011710829.1">
    <property type="nucleotide sequence ID" value="NC_008571.1"/>
</dbReference>
<dbReference type="SMR" id="A0M5N3"/>
<dbReference type="STRING" id="411154.GFO_2981"/>
<dbReference type="KEGG" id="gfo:GFO_2981"/>
<dbReference type="eggNOG" id="COG1521">
    <property type="taxonomic scope" value="Bacteria"/>
</dbReference>
<dbReference type="HOGENOM" id="CLU_066627_2_0_10"/>
<dbReference type="OrthoDB" id="9804707at2"/>
<dbReference type="UniPathway" id="UPA00241">
    <property type="reaction ID" value="UER00352"/>
</dbReference>
<dbReference type="Proteomes" id="UP000000755">
    <property type="component" value="Chromosome"/>
</dbReference>
<dbReference type="GO" id="GO:0005737">
    <property type="term" value="C:cytoplasm"/>
    <property type="evidence" value="ECO:0007669"/>
    <property type="project" value="UniProtKB-SubCell"/>
</dbReference>
<dbReference type="GO" id="GO:0005524">
    <property type="term" value="F:ATP binding"/>
    <property type="evidence" value="ECO:0007669"/>
    <property type="project" value="UniProtKB-UniRule"/>
</dbReference>
<dbReference type="GO" id="GO:0046872">
    <property type="term" value="F:metal ion binding"/>
    <property type="evidence" value="ECO:0007669"/>
    <property type="project" value="UniProtKB-KW"/>
</dbReference>
<dbReference type="GO" id="GO:0004594">
    <property type="term" value="F:pantothenate kinase activity"/>
    <property type="evidence" value="ECO:0007669"/>
    <property type="project" value="UniProtKB-UniRule"/>
</dbReference>
<dbReference type="GO" id="GO:0015937">
    <property type="term" value="P:coenzyme A biosynthetic process"/>
    <property type="evidence" value="ECO:0007669"/>
    <property type="project" value="UniProtKB-UniRule"/>
</dbReference>
<dbReference type="CDD" id="cd24015">
    <property type="entry name" value="ASKHA_NBD_PanK-III"/>
    <property type="match status" value="1"/>
</dbReference>
<dbReference type="Gene3D" id="3.30.420.40">
    <property type="match status" value="2"/>
</dbReference>
<dbReference type="HAMAP" id="MF_01274">
    <property type="entry name" value="Pantothen_kinase_3"/>
    <property type="match status" value="1"/>
</dbReference>
<dbReference type="InterPro" id="IPR043129">
    <property type="entry name" value="ATPase_NBD"/>
</dbReference>
<dbReference type="InterPro" id="IPR004619">
    <property type="entry name" value="Type_III_PanK"/>
</dbReference>
<dbReference type="NCBIfam" id="TIGR00671">
    <property type="entry name" value="baf"/>
    <property type="match status" value="1"/>
</dbReference>
<dbReference type="NCBIfam" id="NF009853">
    <property type="entry name" value="PRK13320.1-5"/>
    <property type="match status" value="1"/>
</dbReference>
<dbReference type="PANTHER" id="PTHR34265">
    <property type="entry name" value="TYPE III PANTOTHENATE KINASE"/>
    <property type="match status" value="1"/>
</dbReference>
<dbReference type="PANTHER" id="PTHR34265:SF1">
    <property type="entry name" value="TYPE III PANTOTHENATE KINASE"/>
    <property type="match status" value="1"/>
</dbReference>
<dbReference type="Pfam" id="PF03309">
    <property type="entry name" value="Pan_kinase"/>
    <property type="match status" value="1"/>
</dbReference>
<dbReference type="SUPFAM" id="SSF53067">
    <property type="entry name" value="Actin-like ATPase domain"/>
    <property type="match status" value="2"/>
</dbReference>
<accession>A0M5N3</accession>
<keyword id="KW-0067">ATP-binding</keyword>
<keyword id="KW-0173">Coenzyme A biosynthesis</keyword>
<keyword id="KW-0963">Cytoplasm</keyword>
<keyword id="KW-0418">Kinase</keyword>
<keyword id="KW-0479">Metal-binding</keyword>
<keyword id="KW-0547">Nucleotide-binding</keyword>
<keyword id="KW-0630">Potassium</keyword>
<keyword id="KW-0808">Transferase</keyword>
<sequence>MNLVIDGGNTFIKTAVFQNNRLLEKQVFLKKDFFENFENLQKKFPAIRKSILSSVTSLDSDLENALKKSYSLLQLDDLVALPFKNEYATPHTLGKDRIALVAAAVNTYPGKNVLIIDAGTCITYDLKTEDEVYLGGAISPGLEMRFKSLHKFTANLPLVTPKPAPKLIGDSTESSILSGIINGIEMELKGTIKSYDSKFEDLTIIFTGGDSQILSIPLKNSIFANSNFLLEGLNFILEFNKTQ</sequence>
<gene>
    <name evidence="1" type="primary">coaX</name>
    <name type="ordered locus">GFO_2981</name>
</gene>
<protein>
    <recommendedName>
        <fullName evidence="1">Type III pantothenate kinase</fullName>
        <ecNumber evidence="1">2.7.1.33</ecNumber>
    </recommendedName>
    <alternativeName>
        <fullName evidence="1">PanK-III</fullName>
    </alternativeName>
    <alternativeName>
        <fullName evidence="1">Pantothenic acid kinase</fullName>
    </alternativeName>
</protein>
<feature type="chain" id="PRO_1000067389" description="Type III pantothenate kinase">
    <location>
        <begin position="1"/>
        <end position="243"/>
    </location>
</feature>
<feature type="active site" description="Proton acceptor" evidence="1">
    <location>
        <position position="96"/>
    </location>
</feature>
<feature type="binding site" evidence="1">
    <location>
        <begin position="6"/>
        <end position="13"/>
    </location>
    <ligand>
        <name>ATP</name>
        <dbReference type="ChEBI" id="CHEBI:30616"/>
    </ligand>
</feature>
<feature type="binding site" evidence="1">
    <location>
        <position position="87"/>
    </location>
    <ligand>
        <name>substrate</name>
    </ligand>
</feature>
<feature type="binding site" evidence="1">
    <location>
        <begin position="94"/>
        <end position="97"/>
    </location>
    <ligand>
        <name>substrate</name>
    </ligand>
</feature>
<feature type="binding site" evidence="1">
    <location>
        <position position="117"/>
    </location>
    <ligand>
        <name>K(+)</name>
        <dbReference type="ChEBI" id="CHEBI:29103"/>
    </ligand>
</feature>
<feature type="binding site" evidence="1">
    <location>
        <position position="120"/>
    </location>
    <ligand>
        <name>ATP</name>
        <dbReference type="ChEBI" id="CHEBI:30616"/>
    </ligand>
</feature>
<feature type="binding site" evidence="1">
    <location>
        <position position="172"/>
    </location>
    <ligand>
        <name>substrate</name>
    </ligand>
</feature>
<reference key="1">
    <citation type="journal article" date="2006" name="Environ. Microbiol.">
        <title>Whole genome analysis of the marine Bacteroidetes'Gramella forsetii' reveals adaptations to degradation of polymeric organic matter.</title>
        <authorList>
            <person name="Bauer M."/>
            <person name="Kube M."/>
            <person name="Teeling H."/>
            <person name="Richter M."/>
            <person name="Lombardot T."/>
            <person name="Allers E."/>
            <person name="Wuerdemann C.A."/>
            <person name="Quast C."/>
            <person name="Kuhl H."/>
            <person name="Knaust F."/>
            <person name="Woebken D."/>
            <person name="Bischof K."/>
            <person name="Mussmann M."/>
            <person name="Choudhuri J.V."/>
            <person name="Meyer F."/>
            <person name="Reinhardt R."/>
            <person name="Amann R.I."/>
            <person name="Gloeckner F.O."/>
        </authorList>
    </citation>
    <scope>NUCLEOTIDE SEQUENCE [LARGE SCALE GENOMIC DNA]</scope>
    <source>
        <strain>DSM 17595 / CGMCC 1.15422 / KT0803</strain>
    </source>
</reference>
<proteinExistence type="inferred from homology"/>